<gene>
    <name evidence="1" type="primary">hemC</name>
    <name type="ordered locus">VF_0066</name>
</gene>
<reference key="1">
    <citation type="journal article" date="2005" name="Proc. Natl. Acad. Sci. U.S.A.">
        <title>Complete genome sequence of Vibrio fischeri: a symbiotic bacterium with pathogenic congeners.</title>
        <authorList>
            <person name="Ruby E.G."/>
            <person name="Urbanowski M."/>
            <person name="Campbell J."/>
            <person name="Dunn A."/>
            <person name="Faini M."/>
            <person name="Gunsalus R."/>
            <person name="Lostroh P."/>
            <person name="Lupp C."/>
            <person name="McCann J."/>
            <person name="Millikan D."/>
            <person name="Schaefer A."/>
            <person name="Stabb E."/>
            <person name="Stevens A."/>
            <person name="Visick K."/>
            <person name="Whistler C."/>
            <person name="Greenberg E.P."/>
        </authorList>
    </citation>
    <scope>NUCLEOTIDE SEQUENCE [LARGE SCALE GENOMIC DNA]</scope>
    <source>
        <strain>ATCC 700601 / ES114</strain>
    </source>
</reference>
<feature type="chain" id="PRO_0000304291" description="Porphobilinogen deaminase">
    <location>
        <begin position="1"/>
        <end position="311"/>
    </location>
</feature>
<feature type="modified residue" description="S-(dipyrrolylmethanemethyl)cysteine" evidence="1">
    <location>
        <position position="243"/>
    </location>
</feature>
<keyword id="KW-0627">Porphyrin biosynthesis</keyword>
<keyword id="KW-1185">Reference proteome</keyword>
<keyword id="KW-0808">Transferase</keyword>
<protein>
    <recommendedName>
        <fullName evidence="1">Porphobilinogen deaminase</fullName>
        <shortName evidence="1">PBG</shortName>
        <ecNumber evidence="1">2.5.1.61</ecNumber>
    </recommendedName>
    <alternativeName>
        <fullName evidence="1">Hydroxymethylbilane synthase</fullName>
        <shortName evidence="1">HMBS</shortName>
    </alternativeName>
    <alternativeName>
        <fullName evidence="1">Pre-uroporphyrinogen synthase</fullName>
    </alternativeName>
</protein>
<sequence length="311" mass="33737">MSQQLPVRIATRKSPLALWQAHFVKDALQAAHPGLEVELVTMVTKGDIILDTPLAKVGGKGLFVKELEVAMLEGRADLAVHSMKDVPVEFPEGLGLVTICEREDPRDAFVSNTYNNIDELPQGAVVGTCSLRRQCQLKEARPDLIIKELRGNVGTRLQKLDDGNYDAIILACAGLIRLGLEDRIKSAIEPEQSLPAVGQGAVGIEARLDDDRLRALLEPLNHPETANRVLCERAMNNRLEGGCQVPIGSYSLIDGDQIWLRALVGEPDGSVMIRGEVSGPVSDAEALGTQLADQLLNDGAKEILERLYAEA</sequence>
<comment type="function">
    <text evidence="1">Tetrapolymerization of the monopyrrole PBG into the hydroxymethylbilane pre-uroporphyrinogen in several discrete steps.</text>
</comment>
<comment type="catalytic activity">
    <reaction evidence="1">
        <text>4 porphobilinogen + H2O = hydroxymethylbilane + 4 NH4(+)</text>
        <dbReference type="Rhea" id="RHEA:13185"/>
        <dbReference type="ChEBI" id="CHEBI:15377"/>
        <dbReference type="ChEBI" id="CHEBI:28938"/>
        <dbReference type="ChEBI" id="CHEBI:57845"/>
        <dbReference type="ChEBI" id="CHEBI:58126"/>
        <dbReference type="EC" id="2.5.1.61"/>
    </reaction>
</comment>
<comment type="cofactor">
    <cofactor evidence="1">
        <name>dipyrromethane</name>
        <dbReference type="ChEBI" id="CHEBI:60342"/>
    </cofactor>
    <text evidence="1">Binds 1 dipyrromethane group covalently.</text>
</comment>
<comment type="pathway">
    <text evidence="1">Porphyrin-containing compound metabolism; protoporphyrin-IX biosynthesis; coproporphyrinogen-III from 5-aminolevulinate: step 2/4.</text>
</comment>
<comment type="subunit">
    <text evidence="1">Monomer.</text>
</comment>
<comment type="miscellaneous">
    <text evidence="1">The porphobilinogen subunits are added to the dipyrromethane group.</text>
</comment>
<comment type="similarity">
    <text evidence="1">Belongs to the HMBS family.</text>
</comment>
<organism>
    <name type="scientific">Aliivibrio fischeri (strain ATCC 700601 / ES114)</name>
    <name type="common">Vibrio fischeri</name>
    <dbReference type="NCBI Taxonomy" id="312309"/>
    <lineage>
        <taxon>Bacteria</taxon>
        <taxon>Pseudomonadati</taxon>
        <taxon>Pseudomonadota</taxon>
        <taxon>Gammaproteobacteria</taxon>
        <taxon>Vibrionales</taxon>
        <taxon>Vibrionaceae</taxon>
        <taxon>Aliivibrio</taxon>
    </lineage>
</organism>
<proteinExistence type="inferred from homology"/>
<name>HEM3_ALIF1</name>
<accession>Q5E8T5</accession>
<evidence type="ECO:0000255" key="1">
    <source>
        <dbReference type="HAMAP-Rule" id="MF_00260"/>
    </source>
</evidence>
<dbReference type="EC" id="2.5.1.61" evidence="1"/>
<dbReference type="EMBL" id="CP000020">
    <property type="protein sequence ID" value="AAW84561.1"/>
    <property type="molecule type" value="Genomic_DNA"/>
</dbReference>
<dbReference type="RefSeq" id="WP_011260939.1">
    <property type="nucleotide sequence ID" value="NZ_CAWLES010000001.1"/>
</dbReference>
<dbReference type="RefSeq" id="YP_203449.1">
    <property type="nucleotide sequence ID" value="NC_006840.2"/>
</dbReference>
<dbReference type="SMR" id="Q5E8T5"/>
<dbReference type="STRING" id="312309.VF_0066"/>
<dbReference type="EnsemblBacteria" id="AAW84561">
    <property type="protein sequence ID" value="AAW84561"/>
    <property type="gene ID" value="VF_0066"/>
</dbReference>
<dbReference type="GeneID" id="54162694"/>
<dbReference type="KEGG" id="vfi:VF_0066"/>
<dbReference type="PATRIC" id="fig|312309.11.peg.66"/>
<dbReference type="eggNOG" id="COG0181">
    <property type="taxonomic scope" value="Bacteria"/>
</dbReference>
<dbReference type="HOGENOM" id="CLU_019704_0_2_6"/>
<dbReference type="OrthoDB" id="9810298at2"/>
<dbReference type="UniPathway" id="UPA00251">
    <property type="reaction ID" value="UER00319"/>
</dbReference>
<dbReference type="Proteomes" id="UP000000537">
    <property type="component" value="Chromosome I"/>
</dbReference>
<dbReference type="GO" id="GO:0005737">
    <property type="term" value="C:cytoplasm"/>
    <property type="evidence" value="ECO:0007669"/>
    <property type="project" value="TreeGrafter"/>
</dbReference>
<dbReference type="GO" id="GO:0004418">
    <property type="term" value="F:hydroxymethylbilane synthase activity"/>
    <property type="evidence" value="ECO:0007669"/>
    <property type="project" value="UniProtKB-UniRule"/>
</dbReference>
<dbReference type="GO" id="GO:0006782">
    <property type="term" value="P:protoporphyrinogen IX biosynthetic process"/>
    <property type="evidence" value="ECO:0007669"/>
    <property type="project" value="UniProtKB-UniRule"/>
</dbReference>
<dbReference type="CDD" id="cd13646">
    <property type="entry name" value="PBP2_EcHMBS_like"/>
    <property type="match status" value="1"/>
</dbReference>
<dbReference type="FunFam" id="3.30.160.40:FF:000002">
    <property type="entry name" value="Porphobilinogen deaminase"/>
    <property type="match status" value="1"/>
</dbReference>
<dbReference type="FunFam" id="3.40.190.10:FF:000004">
    <property type="entry name" value="Porphobilinogen deaminase"/>
    <property type="match status" value="1"/>
</dbReference>
<dbReference type="FunFam" id="3.40.190.10:FF:000005">
    <property type="entry name" value="Porphobilinogen deaminase"/>
    <property type="match status" value="1"/>
</dbReference>
<dbReference type="Gene3D" id="3.40.190.10">
    <property type="entry name" value="Periplasmic binding protein-like II"/>
    <property type="match status" value="2"/>
</dbReference>
<dbReference type="Gene3D" id="3.30.160.40">
    <property type="entry name" value="Porphobilinogen deaminase, C-terminal domain"/>
    <property type="match status" value="1"/>
</dbReference>
<dbReference type="HAMAP" id="MF_00260">
    <property type="entry name" value="Porphobil_deam"/>
    <property type="match status" value="1"/>
</dbReference>
<dbReference type="InterPro" id="IPR000860">
    <property type="entry name" value="HemC"/>
</dbReference>
<dbReference type="InterPro" id="IPR022419">
    <property type="entry name" value="Porphobilin_deaminase_cofac_BS"/>
</dbReference>
<dbReference type="InterPro" id="IPR022417">
    <property type="entry name" value="Porphobilin_deaminase_N"/>
</dbReference>
<dbReference type="InterPro" id="IPR022418">
    <property type="entry name" value="Porphobilinogen_deaminase_C"/>
</dbReference>
<dbReference type="InterPro" id="IPR036803">
    <property type="entry name" value="Porphobilinogen_deaminase_C_sf"/>
</dbReference>
<dbReference type="NCBIfam" id="TIGR00212">
    <property type="entry name" value="hemC"/>
    <property type="match status" value="1"/>
</dbReference>
<dbReference type="PANTHER" id="PTHR11557">
    <property type="entry name" value="PORPHOBILINOGEN DEAMINASE"/>
    <property type="match status" value="1"/>
</dbReference>
<dbReference type="PANTHER" id="PTHR11557:SF0">
    <property type="entry name" value="PORPHOBILINOGEN DEAMINASE"/>
    <property type="match status" value="1"/>
</dbReference>
<dbReference type="Pfam" id="PF01379">
    <property type="entry name" value="Porphobil_deam"/>
    <property type="match status" value="1"/>
</dbReference>
<dbReference type="Pfam" id="PF03900">
    <property type="entry name" value="Porphobil_deamC"/>
    <property type="match status" value="1"/>
</dbReference>
<dbReference type="PIRSF" id="PIRSF001438">
    <property type="entry name" value="4pyrrol_synth_OHMeBilane_synth"/>
    <property type="match status" value="1"/>
</dbReference>
<dbReference type="PRINTS" id="PR00151">
    <property type="entry name" value="PORPHBDMNASE"/>
</dbReference>
<dbReference type="SUPFAM" id="SSF53850">
    <property type="entry name" value="Periplasmic binding protein-like II"/>
    <property type="match status" value="1"/>
</dbReference>
<dbReference type="SUPFAM" id="SSF54782">
    <property type="entry name" value="Porphobilinogen deaminase (hydroxymethylbilane synthase), C-terminal domain"/>
    <property type="match status" value="1"/>
</dbReference>
<dbReference type="PROSITE" id="PS00533">
    <property type="entry name" value="PORPHOBILINOGEN_DEAM"/>
    <property type="match status" value="1"/>
</dbReference>